<accession>P0A8W1</accession>
<accession>P45427</accession>
<organism>
    <name type="scientific">Shigella flexneri</name>
    <dbReference type="NCBI Taxonomy" id="623"/>
    <lineage>
        <taxon>Bacteria</taxon>
        <taxon>Pseudomonadati</taxon>
        <taxon>Pseudomonadota</taxon>
        <taxon>Gammaproteobacteria</taxon>
        <taxon>Enterobacterales</taxon>
        <taxon>Enterobacteriaceae</taxon>
        <taxon>Shigella</taxon>
    </lineage>
</organism>
<evidence type="ECO:0000255" key="1">
    <source>
        <dbReference type="HAMAP-Rule" id="MF_01236"/>
    </source>
</evidence>
<evidence type="ECO:0000256" key="2">
    <source>
        <dbReference type="SAM" id="MobiDB-lite"/>
    </source>
</evidence>
<evidence type="ECO:0000305" key="3"/>
<dbReference type="EMBL" id="AE005674">
    <property type="protein sequence ID" value="AAN44726.2"/>
    <property type="status" value="ALT_INIT"/>
    <property type="molecule type" value="Genomic_DNA"/>
</dbReference>
<dbReference type="EMBL" id="AE014073">
    <property type="protein sequence ID" value="AAP18539.1"/>
    <property type="status" value="ALT_INIT"/>
    <property type="molecule type" value="Genomic_DNA"/>
</dbReference>
<dbReference type="RefSeq" id="WP_000523845.1">
    <property type="nucleotide sequence ID" value="NZ_WPGW01000176.1"/>
</dbReference>
<dbReference type="SMR" id="P0A8W1"/>
<dbReference type="STRING" id="198214.SF3262"/>
<dbReference type="PaxDb" id="198214-SF3262"/>
<dbReference type="GeneID" id="75206076"/>
<dbReference type="KEGG" id="sfl:SF3262"/>
<dbReference type="KEGG" id="sfx:S3479"/>
<dbReference type="PATRIC" id="fig|198214.7.peg.3865"/>
<dbReference type="HOGENOM" id="CLU_017584_9_1_6"/>
<dbReference type="Proteomes" id="UP000001006">
    <property type="component" value="Chromosome"/>
</dbReference>
<dbReference type="Proteomes" id="UP000002673">
    <property type="component" value="Chromosome"/>
</dbReference>
<dbReference type="GO" id="GO:0003677">
    <property type="term" value="F:DNA binding"/>
    <property type="evidence" value="ECO:0007669"/>
    <property type="project" value="UniProtKB-KW"/>
</dbReference>
<dbReference type="GO" id="GO:0003700">
    <property type="term" value="F:DNA-binding transcription factor activity"/>
    <property type="evidence" value="ECO:0007669"/>
    <property type="project" value="UniProtKB-UniRule"/>
</dbReference>
<dbReference type="GO" id="GO:0045892">
    <property type="term" value="P:negative regulation of DNA-templated transcription"/>
    <property type="evidence" value="ECO:0007669"/>
    <property type="project" value="UniProtKB-UniRule"/>
</dbReference>
<dbReference type="CDD" id="cd07377">
    <property type="entry name" value="WHTH_GntR"/>
    <property type="match status" value="1"/>
</dbReference>
<dbReference type="FunFam" id="1.10.10.10:FF:000150">
    <property type="entry name" value="HTH-type transcriptional repressor NanR"/>
    <property type="match status" value="1"/>
</dbReference>
<dbReference type="FunFam" id="1.20.120.530:FF:000006">
    <property type="entry name" value="HTH-type transcriptional repressor NanR"/>
    <property type="match status" value="1"/>
</dbReference>
<dbReference type="Gene3D" id="1.20.120.530">
    <property type="entry name" value="GntR ligand-binding domain-like"/>
    <property type="match status" value="1"/>
</dbReference>
<dbReference type="Gene3D" id="1.10.10.10">
    <property type="entry name" value="Winged helix-like DNA-binding domain superfamily/Winged helix DNA-binding domain"/>
    <property type="match status" value="1"/>
</dbReference>
<dbReference type="HAMAP" id="MF_01236">
    <property type="entry name" value="HTH_NanR"/>
    <property type="match status" value="1"/>
</dbReference>
<dbReference type="InterPro" id="IPR011711">
    <property type="entry name" value="GntR_C"/>
</dbReference>
<dbReference type="InterPro" id="IPR008920">
    <property type="entry name" value="TF_FadR/GntR_C"/>
</dbReference>
<dbReference type="InterPro" id="IPR000524">
    <property type="entry name" value="Tscrpt_reg_HTH_GntR"/>
</dbReference>
<dbReference type="InterPro" id="IPR023730">
    <property type="entry name" value="Tscrpt_reg_NanR"/>
</dbReference>
<dbReference type="InterPro" id="IPR036388">
    <property type="entry name" value="WH-like_DNA-bd_sf"/>
</dbReference>
<dbReference type="InterPro" id="IPR036390">
    <property type="entry name" value="WH_DNA-bd_sf"/>
</dbReference>
<dbReference type="NCBIfam" id="NF003011">
    <property type="entry name" value="PRK03837.1"/>
    <property type="match status" value="1"/>
</dbReference>
<dbReference type="PANTHER" id="PTHR43537:SF53">
    <property type="entry name" value="HTH-TYPE TRANSCRIPTIONAL REPRESSOR NANR"/>
    <property type="match status" value="1"/>
</dbReference>
<dbReference type="PANTHER" id="PTHR43537">
    <property type="entry name" value="TRANSCRIPTIONAL REGULATOR, GNTR FAMILY"/>
    <property type="match status" value="1"/>
</dbReference>
<dbReference type="Pfam" id="PF07729">
    <property type="entry name" value="FCD"/>
    <property type="match status" value="1"/>
</dbReference>
<dbReference type="Pfam" id="PF00392">
    <property type="entry name" value="GntR"/>
    <property type="match status" value="1"/>
</dbReference>
<dbReference type="PRINTS" id="PR00035">
    <property type="entry name" value="HTHGNTR"/>
</dbReference>
<dbReference type="SMART" id="SM00895">
    <property type="entry name" value="FCD"/>
    <property type="match status" value="1"/>
</dbReference>
<dbReference type="SMART" id="SM00345">
    <property type="entry name" value="HTH_GNTR"/>
    <property type="match status" value="1"/>
</dbReference>
<dbReference type="SUPFAM" id="SSF48008">
    <property type="entry name" value="GntR ligand-binding domain-like"/>
    <property type="match status" value="1"/>
</dbReference>
<dbReference type="SUPFAM" id="SSF46785">
    <property type="entry name" value="Winged helix' DNA-binding domain"/>
    <property type="match status" value="1"/>
</dbReference>
<dbReference type="PROSITE" id="PS50949">
    <property type="entry name" value="HTH_GNTR"/>
    <property type="match status" value="1"/>
</dbReference>
<sequence>MGLMNAFDSQTEDSSPAIGRNLRSRPLARKKLSEMVEEELEQMIRRREFGEGEQLPSERELMAFFNVGRPSVREALAALKRKGLVQINNGERARVSRPSADTIIGELSGMAKDFLSHPGGIAHFEQLRLFFESSLVRYAAEHATDEQIDLLAKALEINSQSLDNNAAFIRSDVDFHRVLAEIPGNPIFMAIHVALLDWLIAARPTVTDQALHEHNNVSYQQHIAIVDAIRRHDPDEADRALQSHLNSVSATWHAFGQTTNKKK</sequence>
<proteinExistence type="inferred from homology"/>
<comment type="function">
    <text evidence="1">Transcriptional repressor that controls expression of the genes required for the catabolism of sialic acids.</text>
</comment>
<comment type="similarity">
    <text evidence="1">Belongs to the NanR family.</text>
</comment>
<comment type="sequence caution" evidence="3">
    <conflict type="erroneous initiation">
        <sequence resource="EMBL-CDS" id="AAN44726"/>
    </conflict>
    <text>Truncated N-terminus.</text>
</comment>
<comment type="sequence caution" evidence="3">
    <conflict type="erroneous initiation">
        <sequence resource="EMBL-CDS" id="AAP18539"/>
    </conflict>
    <text>Truncated N-terminus.</text>
</comment>
<reference key="1">
    <citation type="journal article" date="2002" name="Nucleic Acids Res.">
        <title>Genome sequence of Shigella flexneri 2a: insights into pathogenicity through comparison with genomes of Escherichia coli K12 and O157.</title>
        <authorList>
            <person name="Jin Q."/>
            <person name="Yuan Z."/>
            <person name="Xu J."/>
            <person name="Wang Y."/>
            <person name="Shen Y."/>
            <person name="Lu W."/>
            <person name="Wang J."/>
            <person name="Liu H."/>
            <person name="Yang J."/>
            <person name="Yang F."/>
            <person name="Zhang X."/>
            <person name="Zhang J."/>
            <person name="Yang G."/>
            <person name="Wu H."/>
            <person name="Qu D."/>
            <person name="Dong J."/>
            <person name="Sun L."/>
            <person name="Xue Y."/>
            <person name="Zhao A."/>
            <person name="Gao Y."/>
            <person name="Zhu J."/>
            <person name="Kan B."/>
            <person name="Ding K."/>
            <person name="Chen S."/>
            <person name="Cheng H."/>
            <person name="Yao Z."/>
            <person name="He B."/>
            <person name="Chen R."/>
            <person name="Ma D."/>
            <person name="Qiang B."/>
            <person name="Wen Y."/>
            <person name="Hou Y."/>
            <person name="Yu J."/>
        </authorList>
    </citation>
    <scope>NUCLEOTIDE SEQUENCE [LARGE SCALE GENOMIC DNA]</scope>
    <source>
        <strain>301 / Serotype 2a</strain>
    </source>
</reference>
<reference key="2">
    <citation type="journal article" date="2003" name="Infect. Immun.">
        <title>Complete genome sequence and comparative genomics of Shigella flexneri serotype 2a strain 2457T.</title>
        <authorList>
            <person name="Wei J."/>
            <person name="Goldberg M.B."/>
            <person name="Burland V."/>
            <person name="Venkatesan M.M."/>
            <person name="Deng W."/>
            <person name="Fournier G."/>
            <person name="Mayhew G.F."/>
            <person name="Plunkett G. III"/>
            <person name="Rose D.J."/>
            <person name="Darling A."/>
            <person name="Mau B."/>
            <person name="Perna N.T."/>
            <person name="Payne S.M."/>
            <person name="Runyen-Janecky L.J."/>
            <person name="Zhou S."/>
            <person name="Schwartz D.C."/>
            <person name="Blattner F.R."/>
        </authorList>
    </citation>
    <scope>NUCLEOTIDE SEQUENCE [LARGE SCALE GENOMIC DNA]</scope>
    <source>
        <strain>ATCC 700930 / 2457T / Serotype 2a</strain>
    </source>
</reference>
<keyword id="KW-0238">DNA-binding</keyword>
<keyword id="KW-1185">Reference proteome</keyword>
<keyword id="KW-0678">Repressor</keyword>
<keyword id="KW-0804">Transcription</keyword>
<keyword id="KW-0805">Transcription regulation</keyword>
<feature type="chain" id="PRO_0000050660" description="HTH-type transcriptional repressor NanR">
    <location>
        <begin position="1"/>
        <end position="263"/>
    </location>
</feature>
<feature type="domain" description="HTH gntR-type" evidence="1">
    <location>
        <begin position="30"/>
        <end position="98"/>
    </location>
</feature>
<feature type="DNA-binding region" description="H-T-H motif" evidence="1">
    <location>
        <begin position="58"/>
        <end position="77"/>
    </location>
</feature>
<feature type="region of interest" description="Disordered" evidence="2">
    <location>
        <begin position="1"/>
        <end position="22"/>
    </location>
</feature>
<name>NANR_SHIFL</name>
<gene>
    <name evidence="1" type="primary">nanR</name>
    <name type="ordered locus">SF3262</name>
    <name type="ordered locus">S3479</name>
</gene>
<protein>
    <recommendedName>
        <fullName evidence="1">HTH-type transcriptional repressor NanR</fullName>
    </recommendedName>
</protein>